<gene>
    <name type="ORF">IIV6-332L</name>
</gene>
<name>332L_IIV6</name>
<organismHost>
    <name type="scientific">Acheta domesticus</name>
    <name type="common">House cricket</name>
    <dbReference type="NCBI Taxonomy" id="6997"/>
</organismHost>
<organismHost>
    <name type="scientific">Chilo suppressalis</name>
    <name type="common">Asiatic rice borer moth</name>
    <dbReference type="NCBI Taxonomy" id="168631"/>
</organismHost>
<organismHost>
    <name type="scientific">Gryllus bimaculatus</name>
    <name type="common">Two-spotted cricket</name>
    <dbReference type="NCBI Taxonomy" id="6999"/>
</organismHost>
<organismHost>
    <name type="scientific">Gryllus campestris</name>
    <dbReference type="NCBI Taxonomy" id="58607"/>
</organismHost>
<organismHost>
    <name type="scientific">Spodoptera frugiperda</name>
    <name type="common">Fall armyworm</name>
    <dbReference type="NCBI Taxonomy" id="7108"/>
</organismHost>
<keyword id="KW-0479">Metal-binding</keyword>
<keyword id="KW-1185">Reference proteome</keyword>
<keyword id="KW-0862">Zinc</keyword>
<keyword id="KW-0863">Zinc-finger</keyword>
<feature type="chain" id="PRO_0000377775" description="Uncharacterized RING finger protein 332L">
    <location>
        <begin position="1"/>
        <end position="234"/>
    </location>
</feature>
<feature type="zinc finger region" description="RING-type" evidence="1">
    <location>
        <begin position="185"/>
        <end position="220"/>
    </location>
</feature>
<feature type="region of interest" description="Disordered" evidence="2">
    <location>
        <begin position="65"/>
        <end position="89"/>
    </location>
</feature>
<reference key="1">
    <citation type="journal article" date="2001" name="Virology">
        <title>Analysis of the first complete DNA sequence of an invertebrate iridovirus: coding strategy of the genome of Chilo iridescent virus.</title>
        <authorList>
            <person name="Jakob N.J."/>
            <person name="Mueller K."/>
            <person name="Bahr U."/>
            <person name="Darai G."/>
        </authorList>
    </citation>
    <scope>NUCLEOTIDE SEQUENCE [LARGE SCALE GENOMIC DNA]</scope>
</reference>
<reference key="2">
    <citation type="journal article" date="2007" name="Virol. J.">
        <title>Comparative genomic analysis of the family Iridoviridae: re-annotating and defining the core set of iridovirus genes.</title>
        <authorList>
            <person name="Eaton H.E."/>
            <person name="Metcalf J."/>
            <person name="Penny E."/>
            <person name="Tcherepanov V."/>
            <person name="Upton C."/>
            <person name="Brunetti C.R."/>
        </authorList>
    </citation>
    <scope>GENOME REANNOTATION</scope>
</reference>
<comment type="similarity">
    <text evidence="3">Belongs to the IIV-6 175R/332L family.</text>
</comment>
<protein>
    <recommendedName>
        <fullName>Uncharacterized RING finger protein 332L</fullName>
    </recommendedName>
</protein>
<proteinExistence type="inferred from homology"/>
<sequence>MEYTRETMQKMRREELKNIAISYRIYNGYHERPISKMRKSDFIDFIHESVTTPNHSPNTRETILQNANRQEGRRRGLRPSSDGNLRRENRHNEDVIVHFIPSPLSSRHSPISFRDTLRDFDARRRIDFGSSLMGGPLGLLDVVINVLNSTSLDDEEQHELNNEEFTGTIPTEVEEENEAHETVRCAVCLHNKVCVLFQKCKHVITCGPCSLRIKECPVCKRIVESSDKIRIFLP</sequence>
<dbReference type="EMBL" id="AF303741">
    <property type="protein sequence ID" value="AAK82193.1"/>
    <property type="molecule type" value="Genomic_DNA"/>
</dbReference>
<dbReference type="RefSeq" id="NP_149795.1">
    <property type="nucleotide sequence ID" value="NC_003038.1"/>
</dbReference>
<dbReference type="SMR" id="Q91FJ2"/>
<dbReference type="KEGG" id="vg:1733208"/>
<dbReference type="OrthoDB" id="19073at10239"/>
<dbReference type="Proteomes" id="UP000001359">
    <property type="component" value="Genome"/>
</dbReference>
<dbReference type="GO" id="GO:0008270">
    <property type="term" value="F:zinc ion binding"/>
    <property type="evidence" value="ECO:0007669"/>
    <property type="project" value="UniProtKB-KW"/>
</dbReference>
<dbReference type="Gene3D" id="3.30.40.10">
    <property type="entry name" value="Zinc/RING finger domain, C3HC4 (zinc finger)"/>
    <property type="match status" value="1"/>
</dbReference>
<dbReference type="InterPro" id="IPR001841">
    <property type="entry name" value="Znf_RING"/>
</dbReference>
<dbReference type="InterPro" id="IPR013083">
    <property type="entry name" value="Znf_RING/FYVE/PHD"/>
</dbReference>
<dbReference type="Pfam" id="PF13920">
    <property type="entry name" value="zf-C3HC4_3"/>
    <property type="match status" value="1"/>
</dbReference>
<dbReference type="PIRSF" id="PIRSF036836">
    <property type="entry name" value="RNase_bind_SBP1"/>
    <property type="match status" value="1"/>
</dbReference>
<dbReference type="SUPFAM" id="SSF57850">
    <property type="entry name" value="RING/U-box"/>
    <property type="match status" value="1"/>
</dbReference>
<dbReference type="PROSITE" id="PS50089">
    <property type="entry name" value="ZF_RING_2"/>
    <property type="match status" value="1"/>
</dbReference>
<accession>Q91FJ2</accession>
<organism>
    <name type="scientific">Invertebrate iridescent virus 6</name>
    <name type="common">IIV-6</name>
    <name type="synonym">Chilo iridescent virus</name>
    <dbReference type="NCBI Taxonomy" id="176652"/>
    <lineage>
        <taxon>Viruses</taxon>
        <taxon>Varidnaviria</taxon>
        <taxon>Bamfordvirae</taxon>
        <taxon>Nucleocytoviricota</taxon>
        <taxon>Megaviricetes</taxon>
        <taxon>Pimascovirales</taxon>
        <taxon>Iridoviridae</taxon>
        <taxon>Betairidovirinae</taxon>
        <taxon>Iridovirus</taxon>
    </lineage>
</organism>
<evidence type="ECO:0000255" key="1">
    <source>
        <dbReference type="PROSITE-ProRule" id="PRU00175"/>
    </source>
</evidence>
<evidence type="ECO:0000256" key="2">
    <source>
        <dbReference type="SAM" id="MobiDB-lite"/>
    </source>
</evidence>
<evidence type="ECO:0000305" key="3"/>